<gene>
    <name evidence="1" type="primary">uvrC</name>
    <name type="ordered locus">NP_1086A</name>
</gene>
<sequence>MDASAVRKRAAELPAEPGVYQFEAGESVLYVGKAVDLRERVRSYVAPRSDRIRRMVEAAAAVDFAVTDTETQALLLEANLIKRHQPRYNVRLKDDKSYPLVQLTAHEAPRIEITRTPDEAATVFGPYTDKSRVETVVKALRETYELRGCSDHKYEGRDRPCLDYELGLCSAPCTGEIDTDAYAEDVESARRFFDGETGVLAEPLRREMETAAASQAFERAASLRDRLEAVETFHEGGSEAVSGRGGRRLDVLGVAVEGESATVARLRSEDGKLVERDRHRVDAPADAESVPSVLAAFIPQFYAERSLPDVLLLSERYDDEELDQWLHAEGVDIRVPGAGRAATLVELALKNARRTTAEADGPTALARRLGIDRPERIEGFDVSHAGGKDAVGSNVVFVDGSPETADYRRRSLDDENDDYANMRRLVRWRATRAVEGRDDRPTPDLLLIDGGDGQLGAAQDALAETGWDVPAIALAKADELVVTSDGVADWDDGPALRLLQRVRDEAHRFAVQYHQQVRDAVSTPLDSVPGVGPELRERLLKRFGTVDGVRSASREELERVDGVGEDTAAAIDAAL</sequence>
<dbReference type="EMBL" id="CR936257">
    <property type="protein sequence ID" value="CAI48634.1"/>
    <property type="molecule type" value="Genomic_DNA"/>
</dbReference>
<dbReference type="RefSeq" id="WP_011322270.1">
    <property type="nucleotide sequence ID" value="NC_007426.1"/>
</dbReference>
<dbReference type="SMR" id="Q3ITA0"/>
<dbReference type="STRING" id="348780.NP_1086A"/>
<dbReference type="EnsemblBacteria" id="CAI48634">
    <property type="protein sequence ID" value="CAI48634"/>
    <property type="gene ID" value="NP_1086A"/>
</dbReference>
<dbReference type="GeneID" id="3703459"/>
<dbReference type="KEGG" id="nph:NP_1086A"/>
<dbReference type="eggNOG" id="arCOG00873">
    <property type="taxonomic scope" value="Archaea"/>
</dbReference>
<dbReference type="eggNOG" id="arCOG04753">
    <property type="taxonomic scope" value="Archaea"/>
</dbReference>
<dbReference type="HOGENOM" id="CLU_014841_3_1_2"/>
<dbReference type="OrthoDB" id="121419at2157"/>
<dbReference type="Proteomes" id="UP000002698">
    <property type="component" value="Chromosome"/>
</dbReference>
<dbReference type="GO" id="GO:0005737">
    <property type="term" value="C:cytoplasm"/>
    <property type="evidence" value="ECO:0007669"/>
    <property type="project" value="UniProtKB-SubCell"/>
</dbReference>
<dbReference type="GO" id="GO:0009380">
    <property type="term" value="C:excinuclease repair complex"/>
    <property type="evidence" value="ECO:0007669"/>
    <property type="project" value="InterPro"/>
</dbReference>
<dbReference type="GO" id="GO:0003677">
    <property type="term" value="F:DNA binding"/>
    <property type="evidence" value="ECO:0007669"/>
    <property type="project" value="UniProtKB-UniRule"/>
</dbReference>
<dbReference type="GO" id="GO:0009381">
    <property type="term" value="F:excinuclease ABC activity"/>
    <property type="evidence" value="ECO:0007669"/>
    <property type="project" value="UniProtKB-UniRule"/>
</dbReference>
<dbReference type="GO" id="GO:0006289">
    <property type="term" value="P:nucleotide-excision repair"/>
    <property type="evidence" value="ECO:0007669"/>
    <property type="project" value="UniProtKB-UniRule"/>
</dbReference>
<dbReference type="GO" id="GO:0009432">
    <property type="term" value="P:SOS response"/>
    <property type="evidence" value="ECO:0007669"/>
    <property type="project" value="UniProtKB-UniRule"/>
</dbReference>
<dbReference type="CDD" id="cd10434">
    <property type="entry name" value="GIY-YIG_UvrC_Cho"/>
    <property type="match status" value="1"/>
</dbReference>
<dbReference type="FunFam" id="3.40.1440.10:FF:000001">
    <property type="entry name" value="UvrABC system protein C"/>
    <property type="match status" value="1"/>
</dbReference>
<dbReference type="Gene3D" id="1.10.150.20">
    <property type="entry name" value="5' to 3' exonuclease, C-terminal subdomain"/>
    <property type="match status" value="1"/>
</dbReference>
<dbReference type="Gene3D" id="3.40.1440.10">
    <property type="entry name" value="GIY-YIG endonuclease"/>
    <property type="match status" value="1"/>
</dbReference>
<dbReference type="Gene3D" id="4.10.860.10">
    <property type="entry name" value="UVR domain"/>
    <property type="match status" value="1"/>
</dbReference>
<dbReference type="Gene3D" id="3.30.420.340">
    <property type="entry name" value="UvrC, RNAse H endonuclease domain"/>
    <property type="match status" value="1"/>
</dbReference>
<dbReference type="HAMAP" id="MF_00203">
    <property type="entry name" value="UvrC"/>
    <property type="match status" value="1"/>
</dbReference>
<dbReference type="InterPro" id="IPR000305">
    <property type="entry name" value="GIY-YIG_endonuc"/>
</dbReference>
<dbReference type="InterPro" id="IPR035901">
    <property type="entry name" value="GIY-YIG_endonuc_sf"/>
</dbReference>
<dbReference type="InterPro" id="IPR047296">
    <property type="entry name" value="GIY-YIG_UvrC_Cho"/>
</dbReference>
<dbReference type="InterPro" id="IPR003583">
    <property type="entry name" value="Hlx-hairpin-Hlx_DNA-bd_motif"/>
</dbReference>
<dbReference type="InterPro" id="IPR010994">
    <property type="entry name" value="RuvA_2-like"/>
</dbReference>
<dbReference type="InterPro" id="IPR001943">
    <property type="entry name" value="UVR_dom"/>
</dbReference>
<dbReference type="InterPro" id="IPR036876">
    <property type="entry name" value="UVR_dom_sf"/>
</dbReference>
<dbReference type="InterPro" id="IPR050066">
    <property type="entry name" value="UvrABC_protein_C"/>
</dbReference>
<dbReference type="InterPro" id="IPR004791">
    <property type="entry name" value="UvrC"/>
</dbReference>
<dbReference type="InterPro" id="IPR001162">
    <property type="entry name" value="UvrC_RNase_H_dom"/>
</dbReference>
<dbReference type="InterPro" id="IPR038476">
    <property type="entry name" value="UvrC_RNase_H_dom_sf"/>
</dbReference>
<dbReference type="NCBIfam" id="NF011262">
    <property type="entry name" value="PRK14668.1"/>
    <property type="match status" value="1"/>
</dbReference>
<dbReference type="NCBIfam" id="TIGR00194">
    <property type="entry name" value="uvrC"/>
    <property type="match status" value="1"/>
</dbReference>
<dbReference type="PANTHER" id="PTHR30562:SF1">
    <property type="entry name" value="UVRABC SYSTEM PROTEIN C"/>
    <property type="match status" value="1"/>
</dbReference>
<dbReference type="PANTHER" id="PTHR30562">
    <property type="entry name" value="UVRC/OXIDOREDUCTASE"/>
    <property type="match status" value="1"/>
</dbReference>
<dbReference type="Pfam" id="PF01541">
    <property type="entry name" value="GIY-YIG"/>
    <property type="match status" value="1"/>
</dbReference>
<dbReference type="Pfam" id="PF14520">
    <property type="entry name" value="HHH_5"/>
    <property type="match status" value="1"/>
</dbReference>
<dbReference type="Pfam" id="PF02151">
    <property type="entry name" value="UVR"/>
    <property type="match status" value="1"/>
</dbReference>
<dbReference type="Pfam" id="PF22920">
    <property type="entry name" value="UvrC_RNaseH"/>
    <property type="match status" value="1"/>
</dbReference>
<dbReference type="Pfam" id="PF08459">
    <property type="entry name" value="UvrC_RNaseH_dom"/>
    <property type="match status" value="1"/>
</dbReference>
<dbReference type="SMART" id="SM00465">
    <property type="entry name" value="GIYc"/>
    <property type="match status" value="1"/>
</dbReference>
<dbReference type="SMART" id="SM00278">
    <property type="entry name" value="HhH1"/>
    <property type="match status" value="2"/>
</dbReference>
<dbReference type="SUPFAM" id="SSF46600">
    <property type="entry name" value="C-terminal UvrC-binding domain of UvrB"/>
    <property type="match status" value="1"/>
</dbReference>
<dbReference type="SUPFAM" id="SSF82771">
    <property type="entry name" value="GIY-YIG endonuclease"/>
    <property type="match status" value="1"/>
</dbReference>
<dbReference type="SUPFAM" id="SSF47781">
    <property type="entry name" value="RuvA domain 2-like"/>
    <property type="match status" value="1"/>
</dbReference>
<dbReference type="PROSITE" id="PS50164">
    <property type="entry name" value="GIY_YIG"/>
    <property type="match status" value="1"/>
</dbReference>
<dbReference type="PROSITE" id="PS50151">
    <property type="entry name" value="UVR"/>
    <property type="match status" value="1"/>
</dbReference>
<dbReference type="PROSITE" id="PS50165">
    <property type="entry name" value="UVRC"/>
    <property type="match status" value="1"/>
</dbReference>
<accession>Q3ITA0</accession>
<evidence type="ECO:0000255" key="1">
    <source>
        <dbReference type="HAMAP-Rule" id="MF_00203"/>
    </source>
</evidence>
<comment type="function">
    <text evidence="1">The UvrABC repair system catalyzes the recognition and processing of DNA lesions. UvrC both incises the 5' and 3' sides of the lesion. The N-terminal half is responsible for the 3' incision and the C-terminal half is responsible for the 5' incision.</text>
</comment>
<comment type="subunit">
    <text evidence="1">Interacts with UvrB in an incision complex.</text>
</comment>
<comment type="subcellular location">
    <subcellularLocation>
        <location evidence="1">Cytoplasm</location>
    </subcellularLocation>
</comment>
<comment type="similarity">
    <text evidence="1">Belongs to the UvrC family.</text>
</comment>
<proteinExistence type="inferred from homology"/>
<protein>
    <recommendedName>
        <fullName evidence="1">UvrABC system protein C</fullName>
        <shortName evidence="1">Protein UvrC</shortName>
    </recommendedName>
    <alternativeName>
        <fullName evidence="1">Excinuclease ABC subunit C</fullName>
    </alternativeName>
</protein>
<name>UVRC_NATPD</name>
<feature type="chain" id="PRO_0000227498" description="UvrABC system protein C">
    <location>
        <begin position="1"/>
        <end position="575"/>
    </location>
</feature>
<feature type="domain" description="GIY-YIG" evidence="1">
    <location>
        <begin position="15"/>
        <end position="90"/>
    </location>
</feature>
<feature type="domain" description="UVR" evidence="1">
    <location>
        <begin position="198"/>
        <end position="233"/>
    </location>
</feature>
<reference key="1">
    <citation type="journal article" date="2005" name="Genome Res.">
        <title>Living with two extremes: conclusions from the genome sequence of Natronomonas pharaonis.</title>
        <authorList>
            <person name="Falb M."/>
            <person name="Pfeiffer F."/>
            <person name="Palm P."/>
            <person name="Rodewald K."/>
            <person name="Hickmann V."/>
            <person name="Tittor J."/>
            <person name="Oesterhelt D."/>
        </authorList>
    </citation>
    <scope>NUCLEOTIDE SEQUENCE [LARGE SCALE GENOMIC DNA]</scope>
    <source>
        <strain>ATCC 35678 / DSM 2160 / CIP 103997 / JCM 8858 / NBRC 14720 / NCIMB 2260 / Gabara</strain>
    </source>
</reference>
<keyword id="KW-0963">Cytoplasm</keyword>
<keyword id="KW-0227">DNA damage</keyword>
<keyword id="KW-0228">DNA excision</keyword>
<keyword id="KW-0234">DNA repair</keyword>
<keyword id="KW-0267">Excision nuclease</keyword>
<keyword id="KW-1185">Reference proteome</keyword>
<keyword id="KW-0742">SOS response</keyword>
<organism>
    <name type="scientific">Natronomonas pharaonis (strain ATCC 35678 / DSM 2160 / CIP 103997 / JCM 8858 / NBRC 14720 / NCIMB 2260 / Gabara)</name>
    <name type="common">Halobacterium pharaonis</name>
    <dbReference type="NCBI Taxonomy" id="348780"/>
    <lineage>
        <taxon>Archaea</taxon>
        <taxon>Methanobacteriati</taxon>
        <taxon>Methanobacteriota</taxon>
        <taxon>Stenosarchaea group</taxon>
        <taxon>Halobacteria</taxon>
        <taxon>Halobacteriales</taxon>
        <taxon>Haloarculaceae</taxon>
        <taxon>Natronomonas</taxon>
    </lineage>
</organism>